<proteinExistence type="evidence at transcript level"/>
<organism>
    <name type="scientific">Arabidopsis thaliana</name>
    <name type="common">Mouse-ear cress</name>
    <dbReference type="NCBI Taxonomy" id="3702"/>
    <lineage>
        <taxon>Eukaryota</taxon>
        <taxon>Viridiplantae</taxon>
        <taxon>Streptophyta</taxon>
        <taxon>Embryophyta</taxon>
        <taxon>Tracheophyta</taxon>
        <taxon>Spermatophyta</taxon>
        <taxon>Magnoliopsida</taxon>
        <taxon>eudicotyledons</taxon>
        <taxon>Gunneridae</taxon>
        <taxon>Pentapetalae</taxon>
        <taxon>rosids</taxon>
        <taxon>malvids</taxon>
        <taxon>Brassicales</taxon>
        <taxon>Brassicaceae</taxon>
        <taxon>Camelineae</taxon>
        <taxon>Arabidopsis</taxon>
    </lineage>
</organism>
<dbReference type="EC" id="2.3.2.23"/>
<dbReference type="EMBL" id="AB022218">
    <property type="protein sequence ID" value="BAB02364.1"/>
    <property type="molecule type" value="Genomic_DNA"/>
</dbReference>
<dbReference type="EMBL" id="AP000413">
    <property type="protein sequence ID" value="BAB02364.1"/>
    <property type="status" value="JOINED"/>
    <property type="molecule type" value="Genomic_DNA"/>
</dbReference>
<dbReference type="EMBL" id="AC024081">
    <property type="protein sequence ID" value="AAF35401.1"/>
    <property type="molecule type" value="Genomic_DNA"/>
</dbReference>
<dbReference type="EMBL" id="CP002686">
    <property type="protein sequence ID" value="AEE75657.1"/>
    <property type="molecule type" value="Genomic_DNA"/>
</dbReference>
<dbReference type="EMBL" id="AF361806">
    <property type="protein sequence ID" value="AAK32819.1"/>
    <property type="molecule type" value="mRNA"/>
</dbReference>
<dbReference type="EMBL" id="AY059155">
    <property type="protein sequence ID" value="AAL15380.1"/>
    <property type="molecule type" value="mRNA"/>
</dbReference>
<dbReference type="EMBL" id="DQ027038">
    <property type="protein sequence ID" value="AAY44864.1"/>
    <property type="molecule type" value="mRNA"/>
</dbReference>
<dbReference type="RefSeq" id="NP_188154.1">
    <property type="nucleotide sequence ID" value="NM_112402.3"/>
</dbReference>
<dbReference type="SMR" id="Q9LUQ5"/>
<dbReference type="FunCoup" id="Q9LUQ5">
    <property type="interactions" value="889"/>
</dbReference>
<dbReference type="STRING" id="3702.Q9LUQ5"/>
<dbReference type="GlyGen" id="Q9LUQ5">
    <property type="glycosylation" value="1 site"/>
</dbReference>
<dbReference type="PaxDb" id="3702-AT3G15355.1"/>
<dbReference type="ProteomicsDB" id="228657"/>
<dbReference type="EnsemblPlants" id="AT3G15355.1">
    <property type="protein sequence ID" value="AT3G15355.1"/>
    <property type="gene ID" value="AT3G15355"/>
</dbReference>
<dbReference type="GeneID" id="820772"/>
<dbReference type="Gramene" id="AT3G15355.1">
    <property type="protein sequence ID" value="AT3G15355.1"/>
    <property type="gene ID" value="AT3G15355"/>
</dbReference>
<dbReference type="KEGG" id="ath:AT3G15355"/>
<dbReference type="Araport" id="AT3G15355"/>
<dbReference type="TAIR" id="AT3G15355">
    <property type="gene designation" value="UBC25"/>
</dbReference>
<dbReference type="eggNOG" id="KOG0895">
    <property type="taxonomic scope" value="Eukaryota"/>
</dbReference>
<dbReference type="HOGENOM" id="CLU_025097_5_1_1"/>
<dbReference type="InParanoid" id="Q9LUQ5"/>
<dbReference type="OMA" id="NTCRVKR"/>
<dbReference type="PhylomeDB" id="Q9LUQ5"/>
<dbReference type="UniPathway" id="UPA00143"/>
<dbReference type="PRO" id="PR:Q9LUQ5"/>
<dbReference type="Proteomes" id="UP000006548">
    <property type="component" value="Chromosome 3"/>
</dbReference>
<dbReference type="ExpressionAtlas" id="Q9LUQ5">
    <property type="expression patterns" value="baseline and differential"/>
</dbReference>
<dbReference type="GO" id="GO:0005524">
    <property type="term" value="F:ATP binding"/>
    <property type="evidence" value="ECO:0007669"/>
    <property type="project" value="UniProtKB-KW"/>
</dbReference>
<dbReference type="GO" id="GO:0061631">
    <property type="term" value="F:ubiquitin conjugating enzyme activity"/>
    <property type="evidence" value="ECO:0007669"/>
    <property type="project" value="UniProtKB-EC"/>
</dbReference>
<dbReference type="GO" id="GO:0016567">
    <property type="term" value="P:protein ubiquitination"/>
    <property type="evidence" value="ECO:0007669"/>
    <property type="project" value="UniProtKB-UniPathway"/>
</dbReference>
<dbReference type="CDD" id="cd23837">
    <property type="entry name" value="UBCc_UBE2O"/>
    <property type="match status" value="1"/>
</dbReference>
<dbReference type="FunFam" id="3.10.110.10:FF:000028">
    <property type="entry name" value="Probable ubiquitin-conjugating enzyme E2 23"/>
    <property type="match status" value="1"/>
</dbReference>
<dbReference type="Gene3D" id="3.10.110.10">
    <property type="entry name" value="Ubiquitin Conjugating Enzyme"/>
    <property type="match status" value="1"/>
</dbReference>
<dbReference type="InterPro" id="IPR000608">
    <property type="entry name" value="UBQ-conjugat_E2_core"/>
</dbReference>
<dbReference type="InterPro" id="IPR016135">
    <property type="entry name" value="UBQ-conjugating_enzyme/RWD"/>
</dbReference>
<dbReference type="PANTHER" id="PTHR46116">
    <property type="entry name" value="(E3-INDEPENDENT) E2 UBIQUITIN-CONJUGATING ENZYME"/>
    <property type="match status" value="1"/>
</dbReference>
<dbReference type="PANTHER" id="PTHR46116:SF41">
    <property type="entry name" value="UBIQUITIN-CONJUGATING ENZYME E2 25-RELATED"/>
    <property type="match status" value="1"/>
</dbReference>
<dbReference type="Pfam" id="PF00179">
    <property type="entry name" value="UQ_con"/>
    <property type="match status" value="1"/>
</dbReference>
<dbReference type="SMART" id="SM00212">
    <property type="entry name" value="UBCc"/>
    <property type="match status" value="1"/>
</dbReference>
<dbReference type="SUPFAM" id="SSF54495">
    <property type="entry name" value="UBC-like"/>
    <property type="match status" value="1"/>
</dbReference>
<dbReference type="PROSITE" id="PS50127">
    <property type="entry name" value="UBC_2"/>
    <property type="match status" value="1"/>
</dbReference>
<sequence length="609" mass="67769">MEPNVVEIATPPAASCSRIRTPTKAETPEVIDVEEYDLQNGGVPNGNNVDYKNKGKAIDFDSMSYGDYGEEDEYAVGSPGDDYGYPESSPLSNSLLDPESLIYEDDENYSEQYDFEMEAEPDNYSMYQDLFDGKDIPTGVEVSMDWFPNSADKESASSSKSSHANNGNNSSKKATKASGIHSQFSSDMETPVAQPWNALPHKAEGVIPNSAYALPQNSKAFQPPYAVHYSALKTAFSNYLQPQTPDTVLGEAPAPAAGSSGLLPPNTPGFKSNAARFKEEPPILPPDDSRVKRNMEDYLGLYLFFKRFDIVEDFSDHHYASKGTTSKQHSKDWAKRIQDEWRILEKDLPEMIFVRAYESRMDLLRAVIIGAQGTPYHDGLFFFDIFFPDTYPSTPPIVHYHSGGLRINPNLYNCGKVCLSLLGTWSGNQREKWIPNTSTMLQVLVSIQGLILNQKPYFNEPGYERSAGSAHGESTSKAYSENTFILSLKTMVYTMRRPPKYFEDFAYGHFFSCAHDVLKACNAYRNGATPGYLVKGAPDVEENSAGMSSLKFRTDVATFVETVLLKEFILLGVLGLEPEEEEKTPETIIVAESSKCTRSRSKRDRVSSS</sequence>
<evidence type="ECO:0000250" key="1">
    <source>
        <dbReference type="UniProtKB" id="P42743"/>
    </source>
</evidence>
<evidence type="ECO:0000255" key="2">
    <source>
        <dbReference type="PROSITE-ProRule" id="PRU00388"/>
    </source>
</evidence>
<evidence type="ECO:0000256" key="3">
    <source>
        <dbReference type="SAM" id="MobiDB-lite"/>
    </source>
</evidence>
<evidence type="ECO:0000269" key="4">
    <source>
    </source>
</evidence>
<comment type="function">
    <text evidence="1">Accepts the ubiquitin from the E1 complex and catalyzes its covalent attachment to other proteins.</text>
</comment>
<comment type="catalytic activity">
    <reaction evidence="2">
        <text>S-ubiquitinyl-[E1 ubiquitin-activating enzyme]-L-cysteine + [E2 ubiquitin-conjugating enzyme]-L-cysteine = [E1 ubiquitin-activating enzyme]-L-cysteine + S-ubiquitinyl-[E2 ubiquitin-conjugating enzyme]-L-cysteine.</text>
        <dbReference type="EC" id="2.3.2.23"/>
    </reaction>
</comment>
<comment type="pathway">
    <text evidence="2">Protein modification; protein ubiquitination.</text>
</comment>
<comment type="tissue specificity">
    <text evidence="4">Expressed in seeds, pistils, siliques, hypocotyls and leaves.</text>
</comment>
<comment type="similarity">
    <text evidence="2">Belongs to the ubiquitin-conjugating enzyme family.</text>
</comment>
<feature type="chain" id="PRO_0000345190" description="Probable ubiquitin-conjugating enzyme E2 25">
    <location>
        <begin position="1"/>
        <end position="609"/>
    </location>
</feature>
<feature type="domain" description="UBC core" evidence="2">
    <location>
        <begin position="332"/>
        <end position="492"/>
    </location>
</feature>
<feature type="region of interest" description="Disordered" evidence="3">
    <location>
        <begin position="70"/>
        <end position="99"/>
    </location>
</feature>
<feature type="region of interest" description="Disordered" evidence="3">
    <location>
        <begin position="151"/>
        <end position="185"/>
    </location>
</feature>
<feature type="compositionally biased region" description="Low complexity" evidence="3">
    <location>
        <begin position="156"/>
        <end position="178"/>
    </location>
</feature>
<feature type="active site" description="Glycyl thioester intermediate" evidence="2">
    <location>
        <position position="418"/>
    </location>
</feature>
<accession>Q9LUQ5</accession>
<accession>Q4TYY6</accession>
<accession>Q9M7X2</accession>
<name>UBC25_ARATH</name>
<protein>
    <recommendedName>
        <fullName>Probable ubiquitin-conjugating enzyme E2 25</fullName>
        <ecNumber>2.3.2.23</ecNumber>
    </recommendedName>
    <alternativeName>
        <fullName>E2 ubiquitin-conjugating enzyme 25</fullName>
    </alternativeName>
    <alternativeName>
        <fullName>Ubiquitin carrier protein 25</fullName>
    </alternativeName>
</protein>
<reference key="1">
    <citation type="journal article" date="2000" name="DNA Res.">
        <title>Structural analysis of Arabidopsis thaliana chromosome 3. I. Sequence features of the regions of 4,504,864 bp covered by sixty P1 and TAC clones.</title>
        <authorList>
            <person name="Sato S."/>
            <person name="Nakamura Y."/>
            <person name="Kaneko T."/>
            <person name="Katoh T."/>
            <person name="Asamizu E."/>
            <person name="Tabata S."/>
        </authorList>
    </citation>
    <scope>NUCLEOTIDE SEQUENCE [LARGE SCALE GENOMIC DNA]</scope>
    <source>
        <strain>cv. Columbia</strain>
    </source>
</reference>
<reference key="2">
    <citation type="journal article" date="2000" name="DNA Res.">
        <title>Structural analysis of Arabidopsis thaliana chromosome 3. II. Sequence features of the 4,251,695 bp regions covered by 90 P1, TAC and BAC clones.</title>
        <authorList>
            <person name="Kaneko T."/>
            <person name="Katoh T."/>
            <person name="Sato S."/>
            <person name="Nakamura Y."/>
            <person name="Asamizu E."/>
            <person name="Tabata S."/>
        </authorList>
    </citation>
    <scope>NUCLEOTIDE SEQUENCE [LARGE SCALE GENOMIC DNA]</scope>
    <source>
        <strain>cv. Columbia</strain>
    </source>
</reference>
<reference key="3">
    <citation type="journal article" date="2000" name="Nature">
        <title>Sequence and analysis of chromosome 3 of the plant Arabidopsis thaliana.</title>
        <authorList>
            <person name="Salanoubat M."/>
            <person name="Lemcke K."/>
            <person name="Rieger M."/>
            <person name="Ansorge W."/>
            <person name="Unseld M."/>
            <person name="Fartmann B."/>
            <person name="Valle G."/>
            <person name="Bloecker H."/>
            <person name="Perez-Alonso M."/>
            <person name="Obermaier B."/>
            <person name="Delseny M."/>
            <person name="Boutry M."/>
            <person name="Grivell L.A."/>
            <person name="Mache R."/>
            <person name="Puigdomenech P."/>
            <person name="De Simone V."/>
            <person name="Choisne N."/>
            <person name="Artiguenave F."/>
            <person name="Robert C."/>
            <person name="Brottier P."/>
            <person name="Wincker P."/>
            <person name="Cattolico L."/>
            <person name="Weissenbach J."/>
            <person name="Saurin W."/>
            <person name="Quetier F."/>
            <person name="Schaefer M."/>
            <person name="Mueller-Auer S."/>
            <person name="Gabel C."/>
            <person name="Fuchs M."/>
            <person name="Benes V."/>
            <person name="Wurmbach E."/>
            <person name="Drzonek H."/>
            <person name="Erfle H."/>
            <person name="Jordan N."/>
            <person name="Bangert S."/>
            <person name="Wiedelmann R."/>
            <person name="Kranz H."/>
            <person name="Voss H."/>
            <person name="Holland R."/>
            <person name="Brandt P."/>
            <person name="Nyakatura G."/>
            <person name="Vezzi A."/>
            <person name="D'Angelo M."/>
            <person name="Pallavicini A."/>
            <person name="Toppo S."/>
            <person name="Simionati B."/>
            <person name="Conrad A."/>
            <person name="Hornischer K."/>
            <person name="Kauer G."/>
            <person name="Loehnert T.-H."/>
            <person name="Nordsiek G."/>
            <person name="Reichelt J."/>
            <person name="Scharfe M."/>
            <person name="Schoen O."/>
            <person name="Bargues M."/>
            <person name="Terol J."/>
            <person name="Climent J."/>
            <person name="Navarro P."/>
            <person name="Collado C."/>
            <person name="Perez-Perez A."/>
            <person name="Ottenwaelder B."/>
            <person name="Duchemin D."/>
            <person name="Cooke R."/>
            <person name="Laudie M."/>
            <person name="Berger-Llauro C."/>
            <person name="Purnelle B."/>
            <person name="Masuy D."/>
            <person name="de Haan M."/>
            <person name="Maarse A.C."/>
            <person name="Alcaraz J.-P."/>
            <person name="Cottet A."/>
            <person name="Casacuberta E."/>
            <person name="Monfort A."/>
            <person name="Argiriou A."/>
            <person name="Flores M."/>
            <person name="Liguori R."/>
            <person name="Vitale D."/>
            <person name="Mannhaupt G."/>
            <person name="Haase D."/>
            <person name="Schoof H."/>
            <person name="Rudd S."/>
            <person name="Zaccaria P."/>
            <person name="Mewes H.-W."/>
            <person name="Mayer K.F.X."/>
            <person name="Kaul S."/>
            <person name="Town C.D."/>
            <person name="Koo H.L."/>
            <person name="Tallon L.J."/>
            <person name="Jenkins J."/>
            <person name="Rooney T."/>
            <person name="Rizzo M."/>
            <person name="Walts A."/>
            <person name="Utterback T."/>
            <person name="Fujii C.Y."/>
            <person name="Shea T.P."/>
            <person name="Creasy T.H."/>
            <person name="Haas B."/>
            <person name="Maiti R."/>
            <person name="Wu D."/>
            <person name="Peterson J."/>
            <person name="Van Aken S."/>
            <person name="Pai G."/>
            <person name="Militscher J."/>
            <person name="Sellers P."/>
            <person name="Gill J.E."/>
            <person name="Feldblyum T.V."/>
            <person name="Preuss D."/>
            <person name="Lin X."/>
            <person name="Nierman W.C."/>
            <person name="Salzberg S.L."/>
            <person name="White O."/>
            <person name="Venter J.C."/>
            <person name="Fraser C.M."/>
            <person name="Kaneko T."/>
            <person name="Nakamura Y."/>
            <person name="Sato S."/>
            <person name="Kato T."/>
            <person name="Asamizu E."/>
            <person name="Sasamoto S."/>
            <person name="Kimura T."/>
            <person name="Idesawa K."/>
            <person name="Kawashima K."/>
            <person name="Kishida Y."/>
            <person name="Kiyokawa C."/>
            <person name="Kohara M."/>
            <person name="Matsumoto M."/>
            <person name="Matsuno A."/>
            <person name="Muraki A."/>
            <person name="Nakayama S."/>
            <person name="Nakazaki N."/>
            <person name="Shinpo S."/>
            <person name="Takeuchi C."/>
            <person name="Wada T."/>
            <person name="Watanabe A."/>
            <person name="Yamada M."/>
            <person name="Yasuda M."/>
            <person name="Tabata S."/>
        </authorList>
    </citation>
    <scope>NUCLEOTIDE SEQUENCE [LARGE SCALE GENOMIC DNA]</scope>
    <source>
        <strain>cv. Columbia</strain>
    </source>
</reference>
<reference key="4">
    <citation type="journal article" date="2017" name="Plant J.">
        <title>Araport11: a complete reannotation of the Arabidopsis thaliana reference genome.</title>
        <authorList>
            <person name="Cheng C.Y."/>
            <person name="Krishnakumar V."/>
            <person name="Chan A.P."/>
            <person name="Thibaud-Nissen F."/>
            <person name="Schobel S."/>
            <person name="Town C.D."/>
        </authorList>
    </citation>
    <scope>GENOME REANNOTATION</scope>
    <source>
        <strain>cv. Columbia</strain>
    </source>
</reference>
<reference key="5">
    <citation type="journal article" date="2003" name="Science">
        <title>Empirical analysis of transcriptional activity in the Arabidopsis genome.</title>
        <authorList>
            <person name="Yamada K."/>
            <person name="Lim J."/>
            <person name="Dale J.M."/>
            <person name="Chen H."/>
            <person name="Shinn P."/>
            <person name="Palm C.J."/>
            <person name="Southwick A.M."/>
            <person name="Wu H.C."/>
            <person name="Kim C.J."/>
            <person name="Nguyen M."/>
            <person name="Pham P.K."/>
            <person name="Cheuk R.F."/>
            <person name="Karlin-Newmann G."/>
            <person name="Liu S.X."/>
            <person name="Lam B."/>
            <person name="Sakano H."/>
            <person name="Wu T."/>
            <person name="Yu G."/>
            <person name="Miranda M."/>
            <person name="Quach H.L."/>
            <person name="Tripp M."/>
            <person name="Chang C.H."/>
            <person name="Lee J.M."/>
            <person name="Toriumi M.J."/>
            <person name="Chan M.M."/>
            <person name="Tang C.C."/>
            <person name="Onodera C.S."/>
            <person name="Deng J.M."/>
            <person name="Akiyama K."/>
            <person name="Ansari Y."/>
            <person name="Arakawa T."/>
            <person name="Banh J."/>
            <person name="Banno F."/>
            <person name="Bowser L."/>
            <person name="Brooks S.Y."/>
            <person name="Carninci P."/>
            <person name="Chao Q."/>
            <person name="Choy N."/>
            <person name="Enju A."/>
            <person name="Goldsmith A.D."/>
            <person name="Gurjal M."/>
            <person name="Hansen N.F."/>
            <person name="Hayashizaki Y."/>
            <person name="Johnson-Hopson C."/>
            <person name="Hsuan V.W."/>
            <person name="Iida K."/>
            <person name="Karnes M."/>
            <person name="Khan S."/>
            <person name="Koesema E."/>
            <person name="Ishida J."/>
            <person name="Jiang P.X."/>
            <person name="Jones T."/>
            <person name="Kawai J."/>
            <person name="Kamiya A."/>
            <person name="Meyers C."/>
            <person name="Nakajima M."/>
            <person name="Narusaka M."/>
            <person name="Seki M."/>
            <person name="Sakurai T."/>
            <person name="Satou M."/>
            <person name="Tamse R."/>
            <person name="Vaysberg M."/>
            <person name="Wallender E.K."/>
            <person name="Wong C."/>
            <person name="Yamamura Y."/>
            <person name="Yuan S."/>
            <person name="Shinozaki K."/>
            <person name="Davis R.W."/>
            <person name="Theologis A."/>
            <person name="Ecker J.R."/>
        </authorList>
    </citation>
    <scope>NUCLEOTIDE SEQUENCE [LARGE SCALE MRNA]</scope>
    <source>
        <strain>cv. Columbia</strain>
    </source>
</reference>
<reference key="6">
    <citation type="journal article" date="2005" name="Plant Physiol.">
        <title>Genome analysis and functional characterization of the E2 and RING-type E3 ligase ubiquitination enzymes of Arabidopsis.</title>
        <authorList>
            <person name="Kraft E."/>
            <person name="Stone S.L."/>
            <person name="Ma L."/>
            <person name="Su N."/>
            <person name="Gao Y."/>
            <person name="Lau O.-S."/>
            <person name="Deng X.-W."/>
            <person name="Callis J."/>
        </authorList>
    </citation>
    <scope>NUCLEOTIDE SEQUENCE [MRNA] OF 351-609</scope>
    <scope>TISSUE SPECIFICITY</scope>
    <scope>GENE FAMILY</scope>
    <scope>NOMENCLATURE</scope>
</reference>
<keyword id="KW-0067">ATP-binding</keyword>
<keyword id="KW-0547">Nucleotide-binding</keyword>
<keyword id="KW-1185">Reference proteome</keyword>
<keyword id="KW-0808">Transferase</keyword>
<keyword id="KW-0833">Ubl conjugation pathway</keyword>
<gene>
    <name type="primary">UBC25</name>
    <name type="ordered locus">At3g15355</name>
    <name type="ORF">MJK13.1</name>
</gene>